<feature type="chain" id="PRO_0000252639" description="Glucose-6-phosphate isomerase 3">
    <location>
        <begin position="1"/>
        <end position="550"/>
    </location>
</feature>
<feature type="active site" description="Proton donor" evidence="1">
    <location>
        <position position="357"/>
    </location>
</feature>
<feature type="active site" evidence="1">
    <location>
        <position position="388"/>
    </location>
</feature>
<feature type="active site" evidence="1">
    <location>
        <position position="514"/>
    </location>
</feature>
<protein>
    <recommendedName>
        <fullName evidence="1">Glucose-6-phosphate isomerase 3</fullName>
        <shortName evidence="1">GPI 3</shortName>
        <ecNumber evidence="1">5.3.1.9</ecNumber>
    </recommendedName>
    <alternativeName>
        <fullName evidence="1">Phosphoglucose isomerase 3</fullName>
        <shortName evidence="1">PGI 3</shortName>
    </alternativeName>
    <alternativeName>
        <fullName evidence="1">Phosphohexose isomerase 3</fullName>
        <shortName evidence="1">PHI 3</shortName>
    </alternativeName>
</protein>
<accession>Q0RV72</accession>
<evidence type="ECO:0000255" key="1">
    <source>
        <dbReference type="HAMAP-Rule" id="MF_00473"/>
    </source>
</evidence>
<proteinExistence type="inferred from homology"/>
<dbReference type="EC" id="5.3.1.9" evidence="1"/>
<dbReference type="EMBL" id="CP000434">
    <property type="protein sequence ID" value="ABH00814.1"/>
    <property type="molecule type" value="Genomic_DNA"/>
</dbReference>
<dbReference type="RefSeq" id="WP_011600441.1">
    <property type="nucleotide sequence ID" value="NC_008271.1"/>
</dbReference>
<dbReference type="SMR" id="Q0RV72"/>
<dbReference type="KEGG" id="rha:RHA1_ro11167"/>
<dbReference type="PATRIC" id="fig|101510.16.peg.8987"/>
<dbReference type="eggNOG" id="COG0166">
    <property type="taxonomic scope" value="Bacteria"/>
</dbReference>
<dbReference type="HOGENOM" id="CLU_017947_3_1_11"/>
<dbReference type="OrthoDB" id="140919at2"/>
<dbReference type="UniPathway" id="UPA00109">
    <property type="reaction ID" value="UER00181"/>
</dbReference>
<dbReference type="UniPathway" id="UPA00138"/>
<dbReference type="Proteomes" id="UP000008710">
    <property type="component" value="Plasmid pRHL3"/>
</dbReference>
<dbReference type="GO" id="GO:0005829">
    <property type="term" value="C:cytosol"/>
    <property type="evidence" value="ECO:0007669"/>
    <property type="project" value="TreeGrafter"/>
</dbReference>
<dbReference type="GO" id="GO:0097367">
    <property type="term" value="F:carbohydrate derivative binding"/>
    <property type="evidence" value="ECO:0007669"/>
    <property type="project" value="InterPro"/>
</dbReference>
<dbReference type="GO" id="GO:0004347">
    <property type="term" value="F:glucose-6-phosphate isomerase activity"/>
    <property type="evidence" value="ECO:0007669"/>
    <property type="project" value="UniProtKB-UniRule"/>
</dbReference>
<dbReference type="GO" id="GO:0048029">
    <property type="term" value="F:monosaccharide binding"/>
    <property type="evidence" value="ECO:0007669"/>
    <property type="project" value="TreeGrafter"/>
</dbReference>
<dbReference type="GO" id="GO:0006094">
    <property type="term" value="P:gluconeogenesis"/>
    <property type="evidence" value="ECO:0007669"/>
    <property type="project" value="UniProtKB-UniRule"/>
</dbReference>
<dbReference type="GO" id="GO:0051156">
    <property type="term" value="P:glucose 6-phosphate metabolic process"/>
    <property type="evidence" value="ECO:0007669"/>
    <property type="project" value="TreeGrafter"/>
</dbReference>
<dbReference type="GO" id="GO:0006096">
    <property type="term" value="P:glycolytic process"/>
    <property type="evidence" value="ECO:0007669"/>
    <property type="project" value="UniProtKB-UniRule"/>
</dbReference>
<dbReference type="CDD" id="cd05015">
    <property type="entry name" value="SIS_PGI_1"/>
    <property type="match status" value="1"/>
</dbReference>
<dbReference type="CDD" id="cd05016">
    <property type="entry name" value="SIS_PGI_2"/>
    <property type="match status" value="1"/>
</dbReference>
<dbReference type="FunFam" id="3.40.50.10490:FF:000018">
    <property type="entry name" value="Glucose-6-phosphate isomerase"/>
    <property type="match status" value="1"/>
</dbReference>
<dbReference type="Gene3D" id="1.10.1390.10">
    <property type="match status" value="1"/>
</dbReference>
<dbReference type="Gene3D" id="3.40.50.10490">
    <property type="entry name" value="Glucose-6-phosphate isomerase like protein, domain 1"/>
    <property type="match status" value="2"/>
</dbReference>
<dbReference type="HAMAP" id="MF_00473">
    <property type="entry name" value="G6P_isomerase"/>
    <property type="match status" value="1"/>
</dbReference>
<dbReference type="InterPro" id="IPR001672">
    <property type="entry name" value="G6P_Isomerase"/>
</dbReference>
<dbReference type="InterPro" id="IPR023096">
    <property type="entry name" value="G6P_Isomerase_C"/>
</dbReference>
<dbReference type="InterPro" id="IPR018189">
    <property type="entry name" value="Phosphoglucose_isomerase_CS"/>
</dbReference>
<dbReference type="InterPro" id="IPR046348">
    <property type="entry name" value="SIS_dom_sf"/>
</dbReference>
<dbReference type="InterPro" id="IPR035476">
    <property type="entry name" value="SIS_PGI_1"/>
</dbReference>
<dbReference type="InterPro" id="IPR035482">
    <property type="entry name" value="SIS_PGI_2"/>
</dbReference>
<dbReference type="NCBIfam" id="NF001211">
    <property type="entry name" value="PRK00179.1"/>
    <property type="match status" value="1"/>
</dbReference>
<dbReference type="PANTHER" id="PTHR11469">
    <property type="entry name" value="GLUCOSE-6-PHOSPHATE ISOMERASE"/>
    <property type="match status" value="1"/>
</dbReference>
<dbReference type="PANTHER" id="PTHR11469:SF1">
    <property type="entry name" value="GLUCOSE-6-PHOSPHATE ISOMERASE"/>
    <property type="match status" value="1"/>
</dbReference>
<dbReference type="Pfam" id="PF00342">
    <property type="entry name" value="PGI"/>
    <property type="match status" value="1"/>
</dbReference>
<dbReference type="PRINTS" id="PR00662">
    <property type="entry name" value="G6PISOMERASE"/>
</dbReference>
<dbReference type="SUPFAM" id="SSF53697">
    <property type="entry name" value="SIS domain"/>
    <property type="match status" value="1"/>
</dbReference>
<dbReference type="PROSITE" id="PS00765">
    <property type="entry name" value="P_GLUCOSE_ISOMERASE_1"/>
    <property type="match status" value="1"/>
</dbReference>
<dbReference type="PROSITE" id="PS00174">
    <property type="entry name" value="P_GLUCOSE_ISOMERASE_2"/>
    <property type="match status" value="1"/>
</dbReference>
<dbReference type="PROSITE" id="PS51463">
    <property type="entry name" value="P_GLUCOSE_ISOMERASE_3"/>
    <property type="match status" value="1"/>
</dbReference>
<name>G6PI3_RHOJR</name>
<keyword id="KW-0963">Cytoplasm</keyword>
<keyword id="KW-0312">Gluconeogenesis</keyword>
<keyword id="KW-0324">Glycolysis</keyword>
<keyword id="KW-0413">Isomerase</keyword>
<keyword id="KW-0614">Plasmid</keyword>
<organism>
    <name type="scientific">Rhodococcus jostii (strain RHA1)</name>
    <dbReference type="NCBI Taxonomy" id="101510"/>
    <lineage>
        <taxon>Bacteria</taxon>
        <taxon>Bacillati</taxon>
        <taxon>Actinomycetota</taxon>
        <taxon>Actinomycetes</taxon>
        <taxon>Mycobacteriales</taxon>
        <taxon>Nocardiaceae</taxon>
        <taxon>Rhodococcus</taxon>
    </lineage>
</organism>
<gene>
    <name evidence="1" type="primary">pgi3</name>
    <name type="ordered locus">RHA1_ro11167</name>
</gene>
<reference key="1">
    <citation type="journal article" date="2006" name="Proc. Natl. Acad. Sci. U.S.A.">
        <title>The complete genome of Rhodococcus sp. RHA1 provides insights into a catabolic powerhouse.</title>
        <authorList>
            <person name="McLeod M.P."/>
            <person name="Warren R.L."/>
            <person name="Hsiao W.W.L."/>
            <person name="Araki N."/>
            <person name="Myhre M."/>
            <person name="Fernandes C."/>
            <person name="Miyazawa D."/>
            <person name="Wong W."/>
            <person name="Lillquist A.L."/>
            <person name="Wang D."/>
            <person name="Dosanjh M."/>
            <person name="Hara H."/>
            <person name="Petrescu A."/>
            <person name="Morin R.D."/>
            <person name="Yang G."/>
            <person name="Stott J.M."/>
            <person name="Schein J.E."/>
            <person name="Shin H."/>
            <person name="Smailus D."/>
            <person name="Siddiqui A.S."/>
            <person name="Marra M.A."/>
            <person name="Jones S.J.M."/>
            <person name="Holt R."/>
            <person name="Brinkman F.S.L."/>
            <person name="Miyauchi K."/>
            <person name="Fukuda M."/>
            <person name="Davies J.E."/>
            <person name="Mohn W.W."/>
            <person name="Eltis L.D."/>
        </authorList>
    </citation>
    <scope>NUCLEOTIDE SEQUENCE [LARGE SCALE GENOMIC DNA]</scope>
    <source>
        <strain>RHA1</strain>
    </source>
</reference>
<geneLocation type="plasmid">
    <name>pRHL3</name>
</geneLocation>
<sequence length="550" mass="60172">MTATTAQLLTETTPWLRLSEHSEEIDRSHLRALFASDPDRVDEFTVTAGDLHIDYSKHLITRRTRELLLDLARSVDVEGNRDAMLHGEHINTTENRAVLHTALRLPRDASLSVDGQDIVTDVHETLEKMGVFTERLRDGRWRGATGKKITTVVNIGIGGSDLGPVMVYRALRHYADAGISLRFVSNLDPADLTDNLRGLDPAATLFIVTSKTFSTLETLTNATAARRWLVSALGEDAVTKHFVAVSTNAQPVAEFGIAPENIFGFWDWVGGRYSVGSAIGLSVMAAIGRERFTELLDGFHTIDEHFRTAPPESNAPLLLGMLGVWYSSFRGAQSRAVLPYSNDLVRFPAYLQQLTMESNGKSVHTDGSPVRCDTGEIFWGEPGTNGQHAFFQLLHQGTRLVPADFIGFAQSTDDLPTMSGTGSMHDLLMANFFAQSKVLAFGKTRKEIAAESASADLIPHKVMPGNRPSTTILAPRLTPSTLGQLIALYEHQVFVQGVVWGIDSFDQWGVELGKVQALALAPAVAGEAAPCTGDTSTDALIRTYRRLRHP</sequence>
<comment type="function">
    <text evidence="1">Catalyzes the reversible isomerization of glucose-6-phosphate to fructose-6-phosphate.</text>
</comment>
<comment type="catalytic activity">
    <reaction evidence="1">
        <text>alpha-D-glucose 6-phosphate = beta-D-fructose 6-phosphate</text>
        <dbReference type="Rhea" id="RHEA:11816"/>
        <dbReference type="ChEBI" id="CHEBI:57634"/>
        <dbReference type="ChEBI" id="CHEBI:58225"/>
        <dbReference type="EC" id="5.3.1.9"/>
    </reaction>
</comment>
<comment type="pathway">
    <text evidence="1">Carbohydrate biosynthesis; gluconeogenesis.</text>
</comment>
<comment type="pathway">
    <text evidence="1">Carbohydrate degradation; glycolysis; D-glyceraldehyde 3-phosphate and glycerone phosphate from D-glucose: step 2/4.</text>
</comment>
<comment type="subcellular location">
    <subcellularLocation>
        <location evidence="1">Cytoplasm</location>
    </subcellularLocation>
</comment>
<comment type="similarity">
    <text evidence="1">Belongs to the GPI family.</text>
</comment>